<comment type="function">
    <text evidence="1">IGPS catalyzes the conversion of PRFAR and glutamine to IGP, AICAR and glutamate. The HisF subunit catalyzes the cyclization activity that produces IGP and AICAR from PRFAR using the ammonia provided by the HisH subunit (By similarity).</text>
</comment>
<comment type="catalytic activity">
    <reaction>
        <text>5-[(5-phospho-1-deoxy-D-ribulos-1-ylimino)methylamino]-1-(5-phospho-beta-D-ribosyl)imidazole-4-carboxamide + L-glutamine = D-erythro-1-(imidazol-4-yl)glycerol 3-phosphate + 5-amino-1-(5-phospho-beta-D-ribosyl)imidazole-4-carboxamide + L-glutamate + H(+)</text>
        <dbReference type="Rhea" id="RHEA:24793"/>
        <dbReference type="ChEBI" id="CHEBI:15378"/>
        <dbReference type="ChEBI" id="CHEBI:29985"/>
        <dbReference type="ChEBI" id="CHEBI:58278"/>
        <dbReference type="ChEBI" id="CHEBI:58359"/>
        <dbReference type="ChEBI" id="CHEBI:58475"/>
        <dbReference type="ChEBI" id="CHEBI:58525"/>
        <dbReference type="EC" id="4.3.2.10"/>
    </reaction>
</comment>
<comment type="pathway">
    <text>Amino-acid biosynthesis; L-histidine biosynthesis; L-histidine from 5-phospho-alpha-D-ribose 1-diphosphate: step 5/9.</text>
</comment>
<comment type="subunit">
    <text evidence="1">Heterodimer of HisH and HisF.</text>
</comment>
<comment type="subcellular location">
    <subcellularLocation>
        <location evidence="1">Cytoplasm</location>
    </subcellularLocation>
</comment>
<comment type="similarity">
    <text evidence="3">Belongs to the HisA/HisF family.</text>
</comment>
<name>HIS6_KLEOX</name>
<sequence length="258" mass="28216">MLAKRIIPCLDVRDGQVVKGVQFRNHEIIGDIVPLAKRYADEGADELVFYDITASSDGRVVDKSWVSRVAEVIDIPFCVAGGIKSLDDAAQILSFGADKISINSPALADPTLITRLADRFGVQCIVVGIDTWFDAASGKYHVNQYTGDESRTRVTQWETLDWVQEVQKRGAGEIVLNMMNQDGVRNGYDLEQLSKVRAVCRVPLIASGGAGTMEHFLEAFRDASVDGALAASVFHKQIINIGELKTYLAAQGVEIRVC</sequence>
<reference key="1">
    <citation type="journal article" date="1994" name="J. Biol. Chem.">
        <title>Function of hisF and hisH gene products in histidine biosynthesis.</title>
        <authorList>
            <person name="Rieder G."/>
            <person name="Merrick M.J."/>
            <person name="Castorph H."/>
            <person name="Kleiner D."/>
        </authorList>
    </citation>
    <scope>NUCLEOTIDE SEQUENCE [GENOMIC DNA]</scope>
    <source>
        <strain>M5a1</strain>
    </source>
</reference>
<protein>
    <recommendedName>
        <fullName>Imidazole glycerol phosphate synthase subunit HisF</fullName>
        <ecNumber>4.3.2.10</ecNumber>
    </recommendedName>
    <alternativeName>
        <fullName>IGP synthase cyclase subunit</fullName>
    </alternativeName>
    <alternativeName>
        <fullName>IGP synthase subunit HisF</fullName>
    </alternativeName>
    <alternativeName>
        <fullName>ImGP synthase subunit HisF</fullName>
        <shortName>IGPS subunit HisF</shortName>
    </alternativeName>
</protein>
<proteinExistence type="inferred from homology"/>
<feature type="chain" id="PRO_0000142168" description="Imidazole glycerol phosphate synthase subunit HisF">
    <location>
        <begin position="1"/>
        <end position="258"/>
    </location>
</feature>
<feature type="active site" evidence="2">
    <location>
        <position position="11"/>
    </location>
</feature>
<feature type="active site" evidence="2">
    <location>
        <position position="130"/>
    </location>
</feature>
<dbReference type="EC" id="4.3.2.10"/>
<dbReference type="EMBL" id="X56607">
    <property type="protein sequence ID" value="CAA39944.1"/>
    <property type="molecule type" value="Genomic_DNA"/>
</dbReference>
<dbReference type="PIR" id="B54052">
    <property type="entry name" value="B54052"/>
</dbReference>
<dbReference type="SMR" id="P45603"/>
<dbReference type="STRING" id="571.AB185_16895"/>
<dbReference type="eggNOG" id="COG0107">
    <property type="taxonomic scope" value="Bacteria"/>
</dbReference>
<dbReference type="UniPathway" id="UPA00031">
    <property type="reaction ID" value="UER00010"/>
</dbReference>
<dbReference type="GO" id="GO:0005737">
    <property type="term" value="C:cytoplasm"/>
    <property type="evidence" value="ECO:0007669"/>
    <property type="project" value="UniProtKB-SubCell"/>
</dbReference>
<dbReference type="GO" id="GO:0000107">
    <property type="term" value="F:imidazoleglycerol-phosphate synthase activity"/>
    <property type="evidence" value="ECO:0007669"/>
    <property type="project" value="UniProtKB-UniRule"/>
</dbReference>
<dbReference type="GO" id="GO:0016829">
    <property type="term" value="F:lyase activity"/>
    <property type="evidence" value="ECO:0007669"/>
    <property type="project" value="UniProtKB-KW"/>
</dbReference>
<dbReference type="GO" id="GO:0000105">
    <property type="term" value="P:L-histidine biosynthetic process"/>
    <property type="evidence" value="ECO:0007669"/>
    <property type="project" value="UniProtKB-UniRule"/>
</dbReference>
<dbReference type="CDD" id="cd04731">
    <property type="entry name" value="HisF"/>
    <property type="match status" value="1"/>
</dbReference>
<dbReference type="FunFam" id="3.20.20.70:FF:000006">
    <property type="entry name" value="Imidazole glycerol phosphate synthase subunit HisF"/>
    <property type="match status" value="1"/>
</dbReference>
<dbReference type="Gene3D" id="3.20.20.70">
    <property type="entry name" value="Aldolase class I"/>
    <property type="match status" value="1"/>
</dbReference>
<dbReference type="HAMAP" id="MF_01013">
    <property type="entry name" value="HisF"/>
    <property type="match status" value="1"/>
</dbReference>
<dbReference type="InterPro" id="IPR013785">
    <property type="entry name" value="Aldolase_TIM"/>
</dbReference>
<dbReference type="InterPro" id="IPR006062">
    <property type="entry name" value="His_biosynth"/>
</dbReference>
<dbReference type="InterPro" id="IPR004651">
    <property type="entry name" value="HisF"/>
</dbReference>
<dbReference type="InterPro" id="IPR050064">
    <property type="entry name" value="IGPS_HisA/HisF"/>
</dbReference>
<dbReference type="InterPro" id="IPR011060">
    <property type="entry name" value="RibuloseP-bd_barrel"/>
</dbReference>
<dbReference type="NCBIfam" id="TIGR00735">
    <property type="entry name" value="hisF"/>
    <property type="match status" value="1"/>
</dbReference>
<dbReference type="PANTHER" id="PTHR21235:SF2">
    <property type="entry name" value="IMIDAZOLE GLYCEROL PHOSPHATE SYNTHASE HISHF"/>
    <property type="match status" value="1"/>
</dbReference>
<dbReference type="PANTHER" id="PTHR21235">
    <property type="entry name" value="IMIDAZOLE GLYCEROL PHOSPHATE SYNTHASE SUBUNIT HISF/H IGP SYNTHASE SUBUNIT HISF/H"/>
    <property type="match status" value="1"/>
</dbReference>
<dbReference type="Pfam" id="PF00977">
    <property type="entry name" value="His_biosynth"/>
    <property type="match status" value="1"/>
</dbReference>
<dbReference type="SUPFAM" id="SSF51366">
    <property type="entry name" value="Ribulose-phoshate binding barrel"/>
    <property type="match status" value="1"/>
</dbReference>
<accession>P45603</accession>
<gene>
    <name type="primary">hisF</name>
</gene>
<keyword id="KW-0028">Amino-acid biosynthesis</keyword>
<keyword id="KW-0963">Cytoplasm</keyword>
<keyword id="KW-0368">Histidine biosynthesis</keyword>
<keyword id="KW-0456">Lyase</keyword>
<evidence type="ECO:0000250" key="1"/>
<evidence type="ECO:0000255" key="2"/>
<evidence type="ECO:0000305" key="3"/>
<organism>
    <name type="scientific">Klebsiella oxytoca</name>
    <dbReference type="NCBI Taxonomy" id="571"/>
    <lineage>
        <taxon>Bacteria</taxon>
        <taxon>Pseudomonadati</taxon>
        <taxon>Pseudomonadota</taxon>
        <taxon>Gammaproteobacteria</taxon>
        <taxon>Enterobacterales</taxon>
        <taxon>Enterobacteriaceae</taxon>
        <taxon>Klebsiella/Raoultella group</taxon>
        <taxon>Klebsiella</taxon>
    </lineage>
</organism>